<reference key="1">
    <citation type="journal article" date="2009" name="BMC Genomics">
        <title>Comprehensive EST analysis of the symbiotic sea anemone, Anemonia viridis.</title>
        <authorList>
            <person name="Sabourault C."/>
            <person name="Ganot P."/>
            <person name="Deleury E."/>
            <person name="Allemand D."/>
            <person name="Furla P."/>
        </authorList>
    </citation>
    <scope>NUCLEOTIDE SEQUENCE [MRNA]</scope>
</reference>
<reference key="2">
    <citation type="journal article" date="2011" name="BMC Genomics">
        <title>The mining of toxin-like polypeptides from EST database by single residue distribution analysis.</title>
        <authorList>
            <person name="Kozlov S."/>
            <person name="Grishin E."/>
        </authorList>
    </citation>
    <scope>NOMENCLATURE</scope>
</reference>
<reference key="3">
    <citation type="journal article" date="2012" name="Toxicon">
        <title>Development of a rational nomenclature for naming peptide and protein toxins from sea anemones.</title>
        <authorList>
            <person name="Oliveira J.S."/>
            <person name="Fuentes-Silva D."/>
            <person name="King G.F."/>
        </authorList>
    </citation>
    <scope>NOMENCLATURE</scope>
</reference>
<feature type="signal peptide" evidence="2">
    <location>
        <begin position="1"/>
        <end position="16"/>
    </location>
</feature>
<feature type="chain" id="PRO_0000433759" description="U-actitoxin-Avd3i">
    <location>
        <begin position="17"/>
        <end position="75"/>
    </location>
</feature>
<feature type="propeptide" id="PRO_0000433760" evidence="2">
    <location>
        <begin position="76"/>
        <end position="82"/>
    </location>
</feature>
<feature type="domain" description="BPTI/Kunitz inhibitor" evidence="4">
    <location>
        <begin position="21"/>
        <end position="71"/>
    </location>
</feature>
<feature type="site" description="Reactive bond for trypsin" evidence="1">
    <location>
        <begin position="31"/>
        <end position="32"/>
    </location>
</feature>
<feature type="disulfide bond" evidence="4">
    <location>
        <begin position="21"/>
        <end position="71"/>
    </location>
</feature>
<feature type="disulfide bond" evidence="4">
    <location>
        <begin position="30"/>
        <end position="54"/>
    </location>
</feature>
<feature type="disulfide bond" evidence="4">
    <location>
        <begin position="46"/>
        <end position="67"/>
    </location>
</feature>
<comment type="function">
    <text evidence="2 3">Serine protease inhibitor that inhibits both tissue and plasma kallikreins. Has hemolytic activity. Inhibits voltage-gated potassium channels (Kv).</text>
</comment>
<comment type="subcellular location">
    <subcellularLocation>
        <location evidence="7">Secreted</location>
    </subcellularLocation>
    <subcellularLocation>
        <location evidence="7">Nematocyst</location>
    </subcellularLocation>
</comment>
<comment type="similarity">
    <text evidence="7">Belongs to the venom Kunitz-type family. Sea anemone type 2 potassium channel toxin subfamily.</text>
</comment>
<comment type="caution">
    <text evidence="7">Opinions are divided on whether Anemonia viridis (Forsskal, 1775) and Anemonia sulcata (Pennant, 1777) are separate species.</text>
</comment>
<accession>P0DN10</accession>
<protein>
    <recommendedName>
        <fullName evidence="6">U-actitoxin-Avd3i</fullName>
        <shortName evidence="6">U-AITX-Avd3i</shortName>
    </recommendedName>
    <alternativeName>
        <fullName evidence="5">AsKC6</fullName>
    </alternativeName>
</protein>
<proteinExistence type="inferred from homology"/>
<name>VKT6_ANEVI</name>
<organism>
    <name type="scientific">Anemonia viridis</name>
    <name type="common">Snakelocks anemone</name>
    <dbReference type="NCBI Taxonomy" id="51769"/>
    <lineage>
        <taxon>Eukaryota</taxon>
        <taxon>Metazoa</taxon>
        <taxon>Cnidaria</taxon>
        <taxon>Anthozoa</taxon>
        <taxon>Hexacorallia</taxon>
        <taxon>Actiniaria</taxon>
        <taxon>Actiniidae</taxon>
        <taxon>Anemonia</taxon>
    </lineage>
</organism>
<sequence>MVFLLCFFLVADVSYGINGDCELPKVVGPCRAGFRRYYYNSSSKRCEKFIYGGCRGNANNFHTLEECEKVCGVRSRDSPKEN</sequence>
<dbReference type="EMBL" id="FK753133">
    <property type="status" value="NOT_ANNOTATED_CDS"/>
    <property type="molecule type" value="mRNA"/>
</dbReference>
<dbReference type="EMBL" id="FK749316">
    <property type="status" value="NOT_ANNOTATED_CDS"/>
    <property type="molecule type" value="mRNA"/>
</dbReference>
<dbReference type="EMBL" id="FK734320">
    <property type="status" value="NOT_ANNOTATED_CDS"/>
    <property type="molecule type" value="mRNA"/>
</dbReference>
<dbReference type="EMBL" id="FK719943">
    <property type="status" value="NOT_ANNOTATED_CDS"/>
    <property type="molecule type" value="mRNA"/>
</dbReference>
<dbReference type="SMR" id="P0DN10"/>
<dbReference type="GO" id="GO:0005576">
    <property type="term" value="C:extracellular region"/>
    <property type="evidence" value="ECO:0007669"/>
    <property type="project" value="UniProtKB-SubCell"/>
</dbReference>
<dbReference type="GO" id="GO:0042151">
    <property type="term" value="C:nematocyst"/>
    <property type="evidence" value="ECO:0007669"/>
    <property type="project" value="UniProtKB-SubCell"/>
</dbReference>
<dbReference type="GO" id="GO:0015459">
    <property type="term" value="F:potassium channel regulator activity"/>
    <property type="evidence" value="ECO:0007669"/>
    <property type="project" value="UniProtKB-KW"/>
</dbReference>
<dbReference type="GO" id="GO:0004867">
    <property type="term" value="F:serine-type endopeptidase inhibitor activity"/>
    <property type="evidence" value="ECO:0007669"/>
    <property type="project" value="UniProtKB-KW"/>
</dbReference>
<dbReference type="GO" id="GO:0090729">
    <property type="term" value="F:toxin activity"/>
    <property type="evidence" value="ECO:0007669"/>
    <property type="project" value="UniProtKB-KW"/>
</dbReference>
<dbReference type="CDD" id="cd22633">
    <property type="entry name" value="Kunitz_actitoxin-like"/>
    <property type="match status" value="1"/>
</dbReference>
<dbReference type="FunFam" id="4.10.410.10:FF:000021">
    <property type="entry name" value="Serine protease inhibitor, putative"/>
    <property type="match status" value="1"/>
</dbReference>
<dbReference type="Gene3D" id="4.10.410.10">
    <property type="entry name" value="Pancreatic trypsin inhibitor Kunitz domain"/>
    <property type="match status" value="1"/>
</dbReference>
<dbReference type="InterPro" id="IPR002223">
    <property type="entry name" value="Kunitz_BPTI"/>
</dbReference>
<dbReference type="InterPro" id="IPR036880">
    <property type="entry name" value="Kunitz_BPTI_sf"/>
</dbReference>
<dbReference type="InterPro" id="IPR020901">
    <property type="entry name" value="Prtase_inh_Kunz-CS"/>
</dbReference>
<dbReference type="InterPro" id="IPR050098">
    <property type="entry name" value="TFPI/VKTCI-like"/>
</dbReference>
<dbReference type="PANTHER" id="PTHR10083:SF374">
    <property type="entry name" value="BPTI_KUNITZ INHIBITOR DOMAIN-CONTAINING PROTEIN"/>
    <property type="match status" value="1"/>
</dbReference>
<dbReference type="PANTHER" id="PTHR10083">
    <property type="entry name" value="KUNITZ-TYPE PROTEASE INHIBITOR-RELATED"/>
    <property type="match status" value="1"/>
</dbReference>
<dbReference type="Pfam" id="PF00014">
    <property type="entry name" value="Kunitz_BPTI"/>
    <property type="match status" value="1"/>
</dbReference>
<dbReference type="PRINTS" id="PR00759">
    <property type="entry name" value="BASICPTASE"/>
</dbReference>
<dbReference type="SMART" id="SM00131">
    <property type="entry name" value="KU"/>
    <property type="match status" value="1"/>
</dbReference>
<dbReference type="SUPFAM" id="SSF57362">
    <property type="entry name" value="BPTI-like"/>
    <property type="match status" value="1"/>
</dbReference>
<dbReference type="PROSITE" id="PS00280">
    <property type="entry name" value="BPTI_KUNITZ_1"/>
    <property type="match status" value="1"/>
</dbReference>
<dbReference type="PROSITE" id="PS50279">
    <property type="entry name" value="BPTI_KUNITZ_2"/>
    <property type="match status" value="1"/>
</dbReference>
<keyword id="KW-1015">Disulfide bond</keyword>
<keyword id="KW-0872">Ion channel impairing toxin</keyword>
<keyword id="KW-0166">Nematocyst</keyword>
<keyword id="KW-0632">Potassium channel impairing toxin</keyword>
<keyword id="KW-0646">Protease inhibitor</keyword>
<keyword id="KW-0964">Secreted</keyword>
<keyword id="KW-0722">Serine protease inhibitor</keyword>
<keyword id="KW-0732">Signal</keyword>
<keyword id="KW-0800">Toxin</keyword>
<keyword id="KW-1220">Voltage-gated potassium channel impairing toxin</keyword>
<evidence type="ECO:0000250" key="1"/>
<evidence type="ECO:0000250" key="2">
    <source>
        <dbReference type="UniProtKB" id="P10280"/>
    </source>
</evidence>
<evidence type="ECO:0000250" key="3">
    <source>
        <dbReference type="UniProtKB" id="Q9TWF8"/>
    </source>
</evidence>
<evidence type="ECO:0000255" key="4">
    <source>
        <dbReference type="PROSITE-ProRule" id="PRU00031"/>
    </source>
</evidence>
<evidence type="ECO:0000303" key="5">
    <source>
    </source>
</evidence>
<evidence type="ECO:0000303" key="6">
    <source>
    </source>
</evidence>
<evidence type="ECO:0000305" key="7"/>